<evidence type="ECO:0000250" key="1"/>
<evidence type="ECO:0000250" key="2">
    <source>
        <dbReference type="UniProtKB" id="Q6PDC0"/>
    </source>
</evidence>
<evidence type="ECO:0000255" key="3"/>
<evidence type="ECO:0000255" key="4">
    <source>
        <dbReference type="PROSITE-ProRule" id="PRU00178"/>
    </source>
</evidence>
<evidence type="ECO:0000256" key="5">
    <source>
        <dbReference type="SAM" id="MobiDB-lite"/>
    </source>
</evidence>
<evidence type="ECO:0000305" key="6"/>
<name>RUN3B_PONAB</name>
<dbReference type="EMBL" id="CR926116">
    <property type="protein sequence ID" value="CAI29741.1"/>
    <property type="molecule type" value="mRNA"/>
</dbReference>
<dbReference type="RefSeq" id="NP_001129007.1">
    <property type="nucleotide sequence ID" value="NM_001135535.1"/>
</dbReference>
<dbReference type="SMR" id="Q5NVC2"/>
<dbReference type="STRING" id="9601.ENSPPYP00000019996"/>
<dbReference type="GeneID" id="100190847"/>
<dbReference type="KEGG" id="pon:100190847"/>
<dbReference type="CTD" id="154661"/>
<dbReference type="eggNOG" id="KOG4381">
    <property type="taxonomic scope" value="Eukaryota"/>
</dbReference>
<dbReference type="InParanoid" id="Q5NVC2"/>
<dbReference type="OrthoDB" id="10029904at2759"/>
<dbReference type="Proteomes" id="UP000001595">
    <property type="component" value="Unplaced"/>
</dbReference>
<dbReference type="CDD" id="cd17700">
    <property type="entry name" value="RUN_RUNDC3B"/>
    <property type="match status" value="1"/>
</dbReference>
<dbReference type="Gene3D" id="1.20.58.900">
    <property type="match status" value="1"/>
</dbReference>
<dbReference type="InterPro" id="IPR004012">
    <property type="entry name" value="Run_dom"/>
</dbReference>
<dbReference type="InterPro" id="IPR037213">
    <property type="entry name" value="Run_dom_sf"/>
</dbReference>
<dbReference type="InterPro" id="IPR047339">
    <property type="entry name" value="RUN_RUNDC3B"/>
</dbReference>
<dbReference type="InterPro" id="IPR047340">
    <property type="entry name" value="RUNDC3A_B"/>
</dbReference>
<dbReference type="PANTHER" id="PTHR46251">
    <property type="entry name" value="RUN DOMAIN-CONTAINING 3 PROTEIN RUNDC3"/>
    <property type="match status" value="1"/>
</dbReference>
<dbReference type="PANTHER" id="PTHR46251:SF1">
    <property type="entry name" value="RUN DOMAIN-CONTAINING PROTEIN 3B"/>
    <property type="match status" value="1"/>
</dbReference>
<dbReference type="Pfam" id="PF02759">
    <property type="entry name" value="RUN"/>
    <property type="match status" value="1"/>
</dbReference>
<dbReference type="SMART" id="SM00593">
    <property type="entry name" value="RUN"/>
    <property type="match status" value="1"/>
</dbReference>
<dbReference type="SUPFAM" id="SSF140741">
    <property type="entry name" value="RUN domain-like"/>
    <property type="match status" value="1"/>
</dbReference>
<dbReference type="PROSITE" id="PS50826">
    <property type="entry name" value="RUN"/>
    <property type="match status" value="1"/>
</dbReference>
<feature type="chain" id="PRO_0000336052" description="RUN domain-containing protein 3B">
    <location>
        <begin position="1"/>
        <end position="456"/>
    </location>
</feature>
<feature type="domain" description="RUN" evidence="4">
    <location>
        <begin position="57"/>
        <end position="189"/>
    </location>
</feature>
<feature type="region of interest" description="Disordered" evidence="5">
    <location>
        <begin position="1"/>
        <end position="24"/>
    </location>
</feature>
<feature type="region of interest" description="Disordered" evidence="5">
    <location>
        <begin position="216"/>
        <end position="237"/>
    </location>
</feature>
<feature type="region of interest" description="Disordered" evidence="5">
    <location>
        <begin position="382"/>
        <end position="411"/>
    </location>
</feature>
<feature type="coiled-coil region" evidence="3">
    <location>
        <begin position="300"/>
        <end position="325"/>
    </location>
</feature>
<feature type="compositionally biased region" description="Gly residues" evidence="5">
    <location>
        <begin position="8"/>
        <end position="21"/>
    </location>
</feature>
<feature type="compositionally biased region" description="Polar residues" evidence="5">
    <location>
        <begin position="224"/>
        <end position="235"/>
    </location>
</feature>
<feature type="compositionally biased region" description="Polar residues" evidence="5">
    <location>
        <begin position="382"/>
        <end position="405"/>
    </location>
</feature>
<feature type="modified residue" description="Omega-N-methylarginine" evidence="2">
    <location>
        <position position="13"/>
    </location>
</feature>
<feature type="modified residue" description="Phosphoserine" evidence="2">
    <location>
        <position position="215"/>
    </location>
</feature>
<feature type="modified residue" description="Phosphoserine" evidence="2">
    <location>
        <position position="216"/>
    </location>
</feature>
<protein>
    <recommendedName>
        <fullName>RUN domain-containing protein 3B</fullName>
    </recommendedName>
</protein>
<reference key="1">
    <citation type="submission" date="2004-11" db="EMBL/GenBank/DDBJ databases">
        <authorList>
            <consortium name="The German cDNA consortium"/>
        </authorList>
    </citation>
    <scope>NUCLEOTIDE SEQUENCE [LARGE SCALE MRNA]</scope>
    <source>
        <tissue>Brain cortex</tissue>
    </source>
</reference>
<accession>Q5NVC2</accession>
<organism>
    <name type="scientific">Pongo abelii</name>
    <name type="common">Sumatran orangutan</name>
    <name type="synonym">Pongo pygmaeus abelii</name>
    <dbReference type="NCBI Taxonomy" id="9601"/>
    <lineage>
        <taxon>Eukaryota</taxon>
        <taxon>Metazoa</taxon>
        <taxon>Chordata</taxon>
        <taxon>Craniata</taxon>
        <taxon>Vertebrata</taxon>
        <taxon>Euteleostomi</taxon>
        <taxon>Mammalia</taxon>
        <taxon>Eutheria</taxon>
        <taxon>Euarchontoglires</taxon>
        <taxon>Primates</taxon>
        <taxon>Haplorrhini</taxon>
        <taxon>Catarrhini</taxon>
        <taxon>Hominidae</taxon>
        <taxon>Pongo</taxon>
    </lineage>
</organism>
<keyword id="KW-0175">Coiled coil</keyword>
<keyword id="KW-0488">Methylation</keyword>
<keyword id="KW-0597">Phosphoprotein</keyword>
<keyword id="KW-1185">Reference proteome</keyword>
<sequence>MASRSLGGLSGIRGGGGGGGKKSLSARNAAVERRNLITVCRFSVKTLIDRSCFETIDDSSPEFNNFAAILEQILSHRLKGQVTWFGYESPRSFWDYIRVACRKVSQNCICSIENMENVSSSRAKGRAWIRVALMEKHLSEYISTALRDFKTTRRFYEDGAIVLGEEANMLAGMLLGLNAIDFSFCLKGEGLDGSFPAVIDYTPYLKYIQGSDSISSDEEELRTLGSSGSESSTPENVGPPFLMDENSWFNKCKRVKQKYQLTLEQKGYLEELLRLRENQLSESVSQNKILLQRIEDSDLAHKLEKEQLEYIIVELQDQLTVLKNNDLRSRQELTAHLTNQWPSPGALDVNAVALDTLLYRKHNKQWYEKSYQSLDQLSAEVSLSQTSLDPGQSQEGDGKQDTLNVMSEGKEDTPSLLGLCGSLTSVASYKSLTSLKSNDYLASPTTEMTSPGLTPS</sequence>
<proteinExistence type="evidence at transcript level"/>
<comment type="subunit">
    <text evidence="1">Interacts with RAP2A.</text>
</comment>
<comment type="similarity">
    <text evidence="6">Belongs to the RUNDC3 family.</text>
</comment>
<gene>
    <name type="primary">RUNDC3B</name>
</gene>